<sequence>MERRSESPCLRDSPDRRSGSPDVKGPPPVKVARLEQNGSPMGARGRPNGAVAKAVGGLMIPVFCVVEQLDGSLEYDNREEHAEFVLVRKDVLFSQLVETALLALGYSHSSAAQAQGIIKLGRWNPLPLSYVTDAPDATVADMLQDVYHVVTLKIQLQSCSKLEDLPAEQWNHATVRNALKELLKEMNQSTLAKECPLSQSMISSIVNSTYYANVSATKCQEFGRWYKKYKKIKVERVERENLSDYCVLGQRPMHLPNMNQLASLGKTNEQSPHSQIHHSTPIRNQVPALQPIMSPGLLSPQLSPQLVRQQIAMAHLINQQIAVSRLLAHQHPQAINQQFLNHPPIPRAVKPEPTNSSVEVSPDIYQQVRDELKRASVSQAVFARVAFNRTQGLLSEILRKEEDPRTASQSLLVNLRAMQNFLNLPEVERDRIYQDERERSMNPNVSMVSSASSSPSSSRTPQAKTSTPTTDLPIKVDGANVNITAAIYDEIQQEMKRAKVSQALFAKVAANKSQGWLCELLRWKENPSPENRTLWENLCTIRRFLNLPQHERDVIYEEESRHHHSERMQHVVQLPPEPVQVLHRQQSQPTKESSPPREEAPPPPPPTEDSCAKKPRSRTKISLEALGILQSFIHDVGLYPDQEAIHTLSAQLDLPKHTIIKFFQNQRYHVKHHGKLKEHLGSAVDVAEYKDEELLTESEENDSEEGSEEMYKVEAEEENADKSKAAPAETDQR</sequence>
<feature type="chain" id="PRO_0000202401" description="DNA-binding protein SATB2">
    <location>
        <begin position="1"/>
        <end position="733"/>
    </location>
</feature>
<feature type="domain" description="CMP" evidence="5">
    <location>
        <begin position="57"/>
        <end position="158"/>
    </location>
</feature>
<feature type="domain" description="CUTL" evidence="6">
    <location>
        <begin position="161"/>
        <end position="234"/>
    </location>
</feature>
<feature type="DNA-binding region" description="CUT 1" evidence="4">
    <location>
        <begin position="350"/>
        <end position="437"/>
    </location>
</feature>
<feature type="DNA-binding region" description="CUT 2" evidence="4">
    <location>
        <begin position="473"/>
        <end position="560"/>
    </location>
</feature>
<feature type="DNA-binding region" description="Homeobox" evidence="3">
    <location>
        <begin position="615"/>
        <end position="674"/>
    </location>
</feature>
<feature type="region of interest" description="Disordered" evidence="7">
    <location>
        <begin position="1"/>
        <end position="47"/>
    </location>
</feature>
<feature type="region of interest" description="Disordered" evidence="7">
    <location>
        <begin position="435"/>
        <end position="473"/>
    </location>
</feature>
<feature type="region of interest" description="Disordered" evidence="7">
    <location>
        <begin position="580"/>
        <end position="617"/>
    </location>
</feature>
<feature type="region of interest" description="Disordered" evidence="7">
    <location>
        <begin position="691"/>
        <end position="733"/>
    </location>
</feature>
<feature type="compositionally biased region" description="Low complexity" evidence="7">
    <location>
        <begin position="441"/>
        <end position="458"/>
    </location>
</feature>
<feature type="compositionally biased region" description="Polar residues" evidence="7">
    <location>
        <begin position="459"/>
        <end position="470"/>
    </location>
</feature>
<feature type="compositionally biased region" description="Acidic residues" evidence="7">
    <location>
        <begin position="694"/>
        <end position="708"/>
    </location>
</feature>
<feature type="compositionally biased region" description="Basic and acidic residues" evidence="7">
    <location>
        <begin position="709"/>
        <end position="733"/>
    </location>
</feature>
<feature type="modified residue" description="Phosphoserine" evidence="2">
    <location>
        <position position="20"/>
    </location>
</feature>
<feature type="modified residue" description="Phosphoserine" evidence="2">
    <location>
        <position position="39"/>
    </location>
</feature>
<feature type="modified residue" description="Phosphoserine" evidence="2">
    <location>
        <position position="454"/>
    </location>
</feature>
<feature type="modified residue" description="Phosphothreonine" evidence="2">
    <location>
        <position position="467"/>
    </location>
</feature>
<feature type="modified residue" description="Phosphoserine" evidence="2">
    <location>
        <position position="594"/>
    </location>
</feature>
<feature type="cross-link" description="Glycyl lysine isopeptide (Lys-Gly) (interchain with G-Cter in SUMO2)" evidence="2">
    <location>
        <position position="24"/>
    </location>
</feature>
<feature type="cross-link" description="Glycyl lysine isopeptide (Lys-Gly) (interchain with G-Cter in SUMO2)" evidence="2">
    <location>
        <position position="30"/>
    </location>
</feature>
<feature type="cross-link" description="Glycyl lysine isopeptide (Lys-Gly) (interchain with G-Cter in SUMO2)" evidence="2">
    <location>
        <position position="161"/>
    </location>
</feature>
<feature type="cross-link" description="Glycyl lysine isopeptide (Lys-Gly) (interchain with G-Cter in SUMO)" evidence="1">
    <location>
        <position position="233"/>
    </location>
</feature>
<feature type="cross-link" description="Glycyl lysine isopeptide (Lys-Gly) (interchain with G-Cter in SUMO); alternate" evidence="1">
    <location>
        <position position="350"/>
    </location>
</feature>
<feature type="cross-link" description="Glycyl lysine isopeptide (Lys-Gly) (interchain with G-Cter in SUMO2); alternate" evidence="2">
    <location>
        <position position="350"/>
    </location>
</feature>
<feature type="cross-link" description="Glycyl lysine isopeptide (Lys-Gly) (interchain with G-Cter in SUMO2)" evidence="2">
    <location>
        <position position="475"/>
    </location>
</feature>
<feature type="cross-link" description="Glycyl lysine isopeptide (Lys-Gly) (interchain with G-Cter in SUMO2)" evidence="2">
    <location>
        <position position="724"/>
    </location>
</feature>
<feature type="splice variant" id="VSP_008967" description="In isoform 2." evidence="12">
    <location>
        <begin position="58"/>
        <end position="116"/>
    </location>
</feature>
<name>SATB2_MOUSE</name>
<gene>
    <name type="primary">Satb2</name>
    <name type="synonym">Kiaa1034</name>
</gene>
<proteinExistence type="evidence at protein level"/>
<dbReference type="EMBL" id="AF319623">
    <property type="protein sequence ID" value="AAL37172.1"/>
    <property type="molecule type" value="mRNA"/>
</dbReference>
<dbReference type="EMBL" id="AK129270">
    <property type="protein sequence ID" value="BAC98080.1"/>
    <property type="status" value="ALT_INIT"/>
    <property type="molecule type" value="mRNA"/>
</dbReference>
<dbReference type="CCDS" id="CCDS14965.1">
    <molecule id="Q8VI24-1"/>
</dbReference>
<dbReference type="RefSeq" id="NP_001345509.1">
    <molecule id="Q8VI24-1"/>
    <property type="nucleotide sequence ID" value="NM_001358580.2"/>
</dbReference>
<dbReference type="RefSeq" id="NP_001345510.1">
    <molecule id="Q8VI24-1"/>
    <property type="nucleotide sequence ID" value="NM_001358581.2"/>
</dbReference>
<dbReference type="RefSeq" id="NP_001407774.1">
    <molecule id="Q8VI24-1"/>
    <property type="nucleotide sequence ID" value="NM_001420845.1"/>
</dbReference>
<dbReference type="RefSeq" id="NP_631885.1">
    <molecule id="Q8VI24-1"/>
    <property type="nucleotide sequence ID" value="NM_139146.3"/>
</dbReference>
<dbReference type="RefSeq" id="XP_017175119.1">
    <property type="nucleotide sequence ID" value="XM_017319630.1"/>
</dbReference>
<dbReference type="RefSeq" id="XP_017175120.1">
    <property type="nucleotide sequence ID" value="XM_017319631.1"/>
</dbReference>
<dbReference type="SMR" id="Q8VI24"/>
<dbReference type="BioGRID" id="229351">
    <property type="interactions" value="10"/>
</dbReference>
<dbReference type="DIP" id="DIP-60021N"/>
<dbReference type="FunCoup" id="Q8VI24">
    <property type="interactions" value="1255"/>
</dbReference>
<dbReference type="IntAct" id="Q8VI24">
    <property type="interactions" value="93"/>
</dbReference>
<dbReference type="MINT" id="Q8VI24"/>
<dbReference type="STRING" id="10090.ENSMUSP00000110057"/>
<dbReference type="GlyGen" id="Q8VI24">
    <property type="glycosylation" value="2 sites, 2 N-linked glycans (2 sites)"/>
</dbReference>
<dbReference type="iPTMnet" id="Q8VI24"/>
<dbReference type="PhosphoSitePlus" id="Q8VI24"/>
<dbReference type="jPOST" id="Q8VI24"/>
<dbReference type="PaxDb" id="10090-ENSMUSP00000110057"/>
<dbReference type="ProteomicsDB" id="255459">
    <molecule id="Q8VI24-1"/>
</dbReference>
<dbReference type="ProteomicsDB" id="255460">
    <molecule id="Q8VI24-2"/>
</dbReference>
<dbReference type="Antibodypedia" id="19915">
    <property type="antibodies" value="409 antibodies from 41 providers"/>
</dbReference>
<dbReference type="DNASU" id="212712"/>
<dbReference type="Ensembl" id="ENSMUST00000042857.14">
    <molecule id="Q8VI24-2"/>
    <property type="protein sequence ID" value="ENSMUSP00000046067.8"/>
    <property type="gene ID" value="ENSMUSG00000038331.16"/>
</dbReference>
<dbReference type="Ensembl" id="ENSMUST00000114415.10">
    <molecule id="Q8VI24-1"/>
    <property type="protein sequence ID" value="ENSMUSP00000110057.4"/>
    <property type="gene ID" value="ENSMUSG00000038331.16"/>
</dbReference>
<dbReference type="GeneID" id="212712"/>
<dbReference type="KEGG" id="mmu:212712"/>
<dbReference type="UCSC" id="uc007bas.1">
    <molecule id="Q8VI24-1"/>
    <property type="organism name" value="mouse"/>
</dbReference>
<dbReference type="UCSC" id="uc011wlc.1">
    <molecule id="Q8VI24-2"/>
    <property type="organism name" value="mouse"/>
</dbReference>
<dbReference type="AGR" id="MGI:2679336"/>
<dbReference type="CTD" id="23314"/>
<dbReference type="MGI" id="MGI:2679336">
    <property type="gene designation" value="Satb2"/>
</dbReference>
<dbReference type="VEuPathDB" id="HostDB:ENSMUSG00000038331"/>
<dbReference type="eggNOG" id="KOG3755">
    <property type="taxonomic scope" value="Eukaryota"/>
</dbReference>
<dbReference type="GeneTree" id="ENSGT00390000008096"/>
<dbReference type="HOGENOM" id="CLU_012559_1_0_1"/>
<dbReference type="InParanoid" id="Q8VI24"/>
<dbReference type="OMA" id="YCDLPVG"/>
<dbReference type="OrthoDB" id="10052721at2759"/>
<dbReference type="PhylomeDB" id="Q8VI24"/>
<dbReference type="TreeFam" id="TF332714"/>
<dbReference type="Reactome" id="R-MMU-4551638">
    <property type="pathway name" value="SUMOylation of chromatin organization proteins"/>
</dbReference>
<dbReference type="BioGRID-ORCS" id="212712">
    <property type="hits" value="2 hits in 84 CRISPR screens"/>
</dbReference>
<dbReference type="ChiTaRS" id="Satb2">
    <property type="organism name" value="mouse"/>
</dbReference>
<dbReference type="PRO" id="PR:Q8VI24"/>
<dbReference type="Proteomes" id="UP000000589">
    <property type="component" value="Chromosome 1"/>
</dbReference>
<dbReference type="RNAct" id="Q8VI24">
    <property type="molecule type" value="protein"/>
</dbReference>
<dbReference type="Bgee" id="ENSMUSG00000038331">
    <property type="expression patterns" value="Expressed in facial bone and 156 other cell types or tissues"/>
</dbReference>
<dbReference type="ExpressionAtlas" id="Q8VI24">
    <property type="expression patterns" value="baseline and differential"/>
</dbReference>
<dbReference type="GO" id="GO:0000785">
    <property type="term" value="C:chromatin"/>
    <property type="evidence" value="ECO:0000305"/>
    <property type="project" value="MGI"/>
</dbReference>
<dbReference type="GO" id="GO:0000118">
    <property type="term" value="C:histone deacetylase complex"/>
    <property type="evidence" value="ECO:0000314"/>
    <property type="project" value="MGI"/>
</dbReference>
<dbReference type="GO" id="GO:0016363">
    <property type="term" value="C:nuclear matrix"/>
    <property type="evidence" value="ECO:0007669"/>
    <property type="project" value="UniProtKB-SubCell"/>
</dbReference>
<dbReference type="GO" id="GO:0005654">
    <property type="term" value="C:nucleoplasm"/>
    <property type="evidence" value="ECO:0000304"/>
    <property type="project" value="Reactome"/>
</dbReference>
<dbReference type="GO" id="GO:0005634">
    <property type="term" value="C:nucleus"/>
    <property type="evidence" value="ECO:0000314"/>
    <property type="project" value="MGI"/>
</dbReference>
<dbReference type="GO" id="GO:0005667">
    <property type="term" value="C:transcription regulator complex"/>
    <property type="evidence" value="ECO:0000314"/>
    <property type="project" value="MGI"/>
</dbReference>
<dbReference type="GO" id="GO:0003682">
    <property type="term" value="F:chromatin binding"/>
    <property type="evidence" value="ECO:0000314"/>
    <property type="project" value="MGI"/>
</dbReference>
<dbReference type="GO" id="GO:0001228">
    <property type="term" value="F:DNA-binding transcription activator activity, RNA polymerase II-specific"/>
    <property type="evidence" value="ECO:0007669"/>
    <property type="project" value="Ensembl"/>
</dbReference>
<dbReference type="GO" id="GO:0001227">
    <property type="term" value="F:DNA-binding transcription repressor activity, RNA polymerase II-specific"/>
    <property type="evidence" value="ECO:0000305"/>
    <property type="project" value="NTNU_SB"/>
</dbReference>
<dbReference type="GO" id="GO:0000978">
    <property type="term" value="F:RNA polymerase II cis-regulatory region sequence-specific DNA binding"/>
    <property type="evidence" value="ECO:0000314"/>
    <property type="project" value="MGI"/>
</dbReference>
<dbReference type="GO" id="GO:0000977">
    <property type="term" value="F:RNA polymerase II transcription regulatory region sequence-specific DNA binding"/>
    <property type="evidence" value="ECO:0000314"/>
    <property type="project" value="NTNU_SB"/>
</dbReference>
<dbReference type="GO" id="GO:0043565">
    <property type="term" value="F:sequence-specific DNA binding"/>
    <property type="evidence" value="ECO:0000316"/>
    <property type="project" value="MGI"/>
</dbReference>
<dbReference type="GO" id="GO:0051216">
    <property type="term" value="P:cartilage development"/>
    <property type="evidence" value="ECO:0000315"/>
    <property type="project" value="MGI"/>
</dbReference>
<dbReference type="GO" id="GO:0006338">
    <property type="term" value="P:chromatin remodeling"/>
    <property type="evidence" value="ECO:0000314"/>
    <property type="project" value="MGI"/>
</dbReference>
<dbReference type="GO" id="GO:0009880">
    <property type="term" value="P:embryonic pattern specification"/>
    <property type="evidence" value="ECO:0000315"/>
    <property type="project" value="MGI"/>
</dbReference>
<dbReference type="GO" id="GO:0048704">
    <property type="term" value="P:embryonic skeletal system morphogenesis"/>
    <property type="evidence" value="ECO:0000315"/>
    <property type="project" value="MGI"/>
</dbReference>
<dbReference type="GO" id="GO:0000122">
    <property type="term" value="P:negative regulation of transcription by RNA polymerase II"/>
    <property type="evidence" value="ECO:0000315"/>
    <property type="project" value="MGI"/>
</dbReference>
<dbReference type="GO" id="GO:0001764">
    <property type="term" value="P:neuron migration"/>
    <property type="evidence" value="ECO:0000315"/>
    <property type="project" value="MGI"/>
</dbReference>
<dbReference type="GO" id="GO:0002076">
    <property type="term" value="P:osteoblast development"/>
    <property type="evidence" value="ECO:0000315"/>
    <property type="project" value="MGI"/>
</dbReference>
<dbReference type="GO" id="GO:0045944">
    <property type="term" value="P:positive regulation of transcription by RNA polymerase II"/>
    <property type="evidence" value="ECO:0000314"/>
    <property type="project" value="MGI"/>
</dbReference>
<dbReference type="GO" id="GO:0010468">
    <property type="term" value="P:regulation of gene expression"/>
    <property type="evidence" value="ECO:0000315"/>
    <property type="project" value="MGI"/>
</dbReference>
<dbReference type="GO" id="GO:0060021">
    <property type="term" value="P:roof of mouth development"/>
    <property type="evidence" value="ECO:0000315"/>
    <property type="project" value="MGI"/>
</dbReference>
<dbReference type="CDD" id="cd00086">
    <property type="entry name" value="homeodomain"/>
    <property type="match status" value="1"/>
</dbReference>
<dbReference type="CDD" id="cd11585">
    <property type="entry name" value="SATB1_N"/>
    <property type="match status" value="1"/>
</dbReference>
<dbReference type="FunFam" id="1.10.10.60:FF:000070">
    <property type="entry name" value="DNA-binding protein SATB"/>
    <property type="match status" value="1"/>
</dbReference>
<dbReference type="FunFam" id="1.10.260.40:FF:000003">
    <property type="entry name" value="DNA-binding protein SATB"/>
    <property type="match status" value="2"/>
</dbReference>
<dbReference type="FunFam" id="1.10.260.70:FF:000001">
    <property type="entry name" value="DNA-binding protein SATB"/>
    <property type="match status" value="1"/>
</dbReference>
<dbReference type="FunFam" id="3.10.20.710:FF:000001">
    <property type="entry name" value="DNA-binding protein SATB"/>
    <property type="match status" value="1"/>
</dbReference>
<dbReference type="Gene3D" id="1.10.10.60">
    <property type="entry name" value="Homeodomain-like"/>
    <property type="match status" value="1"/>
</dbReference>
<dbReference type="Gene3D" id="1.10.260.40">
    <property type="entry name" value="lambda repressor-like DNA-binding domains"/>
    <property type="match status" value="2"/>
</dbReference>
<dbReference type="Gene3D" id="1.10.260.70">
    <property type="entry name" value="SATB, CULT domain"/>
    <property type="match status" value="1"/>
</dbReference>
<dbReference type="Gene3D" id="3.10.20.710">
    <property type="entry name" value="SATB, ubiquitin-like oligomerisation domain"/>
    <property type="match status" value="1"/>
</dbReference>
<dbReference type="InterPro" id="IPR003350">
    <property type="entry name" value="CUT_dom"/>
</dbReference>
<dbReference type="InterPro" id="IPR032355">
    <property type="entry name" value="CUTL"/>
</dbReference>
<dbReference type="InterPro" id="IPR001356">
    <property type="entry name" value="HD"/>
</dbReference>
<dbReference type="InterPro" id="IPR009057">
    <property type="entry name" value="Homeodomain-like_sf"/>
</dbReference>
<dbReference type="InterPro" id="IPR010982">
    <property type="entry name" value="Lambda_DNA-bd_dom_sf"/>
</dbReference>
<dbReference type="InterPro" id="IPR039673">
    <property type="entry name" value="SATB1/SATB2"/>
</dbReference>
<dbReference type="InterPro" id="IPR038216">
    <property type="entry name" value="SATB_CUTL_sf"/>
</dbReference>
<dbReference type="InterPro" id="IPR038224">
    <property type="entry name" value="SATB_ULD_sf"/>
</dbReference>
<dbReference type="InterPro" id="IPR032392">
    <property type="entry name" value="ULD"/>
</dbReference>
<dbReference type="PANTHER" id="PTHR15116">
    <property type="entry name" value="DNA-BINDING PROTEIN SATB FAMILY MEMBER"/>
    <property type="match status" value="1"/>
</dbReference>
<dbReference type="PANTHER" id="PTHR15116:SF15">
    <property type="entry name" value="DNA-BINDING PROTEIN SATB2"/>
    <property type="match status" value="1"/>
</dbReference>
<dbReference type="Pfam" id="PF02376">
    <property type="entry name" value="CUT"/>
    <property type="match status" value="2"/>
</dbReference>
<dbReference type="Pfam" id="PF16557">
    <property type="entry name" value="CUTL"/>
    <property type="match status" value="1"/>
</dbReference>
<dbReference type="Pfam" id="PF00046">
    <property type="entry name" value="Homeodomain"/>
    <property type="match status" value="1"/>
</dbReference>
<dbReference type="Pfam" id="PF16534">
    <property type="entry name" value="ULD"/>
    <property type="match status" value="1"/>
</dbReference>
<dbReference type="SMART" id="SM01109">
    <property type="entry name" value="CUT"/>
    <property type="match status" value="2"/>
</dbReference>
<dbReference type="SMART" id="SM00389">
    <property type="entry name" value="HOX"/>
    <property type="match status" value="1"/>
</dbReference>
<dbReference type="SUPFAM" id="SSF46689">
    <property type="entry name" value="Homeodomain-like"/>
    <property type="match status" value="1"/>
</dbReference>
<dbReference type="SUPFAM" id="SSF47413">
    <property type="entry name" value="lambda repressor-like DNA-binding domains"/>
    <property type="match status" value="2"/>
</dbReference>
<dbReference type="PROSITE" id="PS51982">
    <property type="entry name" value="CMP"/>
    <property type="match status" value="1"/>
</dbReference>
<dbReference type="PROSITE" id="PS51042">
    <property type="entry name" value="CUT"/>
    <property type="match status" value="2"/>
</dbReference>
<dbReference type="PROSITE" id="PS51983">
    <property type="entry name" value="CUTL"/>
    <property type="match status" value="1"/>
</dbReference>
<dbReference type="PROSITE" id="PS50071">
    <property type="entry name" value="HOMEOBOX_2"/>
    <property type="match status" value="1"/>
</dbReference>
<accession>Q8VI24</accession>
<keyword id="KW-0025">Alternative splicing</keyword>
<keyword id="KW-0156">Chromatin regulator</keyword>
<keyword id="KW-0160">Chromosomal rearrangement</keyword>
<keyword id="KW-0217">Developmental protein</keyword>
<keyword id="KW-0238">DNA-binding</keyword>
<keyword id="KW-0371">Homeobox</keyword>
<keyword id="KW-1017">Isopeptide bond</keyword>
<keyword id="KW-0539">Nucleus</keyword>
<keyword id="KW-0597">Phosphoprotein</keyword>
<keyword id="KW-1185">Reference proteome</keyword>
<keyword id="KW-0677">Repeat</keyword>
<keyword id="KW-0678">Repressor</keyword>
<keyword id="KW-0804">Transcription</keyword>
<keyword id="KW-0805">Transcription regulation</keyword>
<keyword id="KW-0832">Ubl conjugation</keyword>
<comment type="function">
    <text evidence="9 10 11">Binds to DNA, at nuclear matrix- or scaffold-associated regions. Thought to recognize the sugar-phosphate structure of double-stranded DNA. Transcription factor controlling nuclear gene expression, by binding to matrix attachment regions (MARs) of DNA and inducing a local chromatin-loop remodeling. Acts as a docking site for several chromatin remodeling enzymes and also by recruiting corepressors (HDACs) or coactivators (HATs) directly to promoters and enhancers. Required for the initiation of the upper-layer neurons (UL1) specific genetic program and for the inactivation of deep-layer neurons (DL) and UL2 specific genes, probably by modulating Bcl11b expression. Repressor of Ctip2 and regulatory determinant of corticocortical connections in the developing cerebral cortex. May play an important role in palate formation. Acts as a molecular node in a transcriptional network regulating skeletal development and osteoblast differentiation.</text>
</comment>
<comment type="subunit">
    <text evidence="1 9">Interacts with PIAS1 (By similarity). Interacts with ATF4 and RUNX2; resulting in enhanced DNA binding and transactivation by these transcription factors.</text>
</comment>
<comment type="interaction">
    <interactant intactId="EBI-5737999">
        <id>Q8VI24</id>
    </interactant>
    <interactant intactId="EBI-642309">
        <id>P53564</id>
        <label>Cux1</label>
    </interactant>
    <organismsDiffer>false</organismsDiffer>
    <experiments>3</experiments>
</comment>
<comment type="interaction">
    <interactant intactId="EBI-5737999">
        <id>Q8VI24</id>
    </interactant>
    <interactant intactId="EBI-301912">
        <id>O09106</id>
        <label>Hdac1</label>
    </interactant>
    <organismsDiffer>false</organismsDiffer>
    <experiments>4</experiments>
</comment>
<comment type="interaction">
    <interactant intactId="EBI-5737999">
        <id>Q8VI24</id>
    </interactant>
    <interactant intactId="EBI-904134">
        <id>Q9R190</id>
        <label>Mta2</label>
    </interactant>
    <organismsDiffer>false</organismsDiffer>
    <experiments>2</experiments>
</comment>
<comment type="interaction">
    <interactant intactId="EBI-5737999">
        <id>Q8VI24</id>
    </interactant>
    <interactant intactId="EBI-15969860">
        <id>Q60698</id>
        <label>Ski</label>
    </interactant>
    <organismsDiffer>false</organismsDiffer>
    <experiments>3</experiments>
</comment>
<comment type="interaction">
    <interactant intactId="EBI-5737999">
        <id>Q8VI24</id>
    </interactant>
    <interactant intactId="EBI-347281">
        <id>P12755</id>
        <label>SKI</label>
    </interactant>
    <organismsDiffer>true</organismsDiffer>
    <experiments>2</experiments>
</comment>
<comment type="subcellular location">
    <subcellularLocation>
        <location evidence="3 4">Nucleus matrix</location>
    </subcellularLocation>
</comment>
<comment type="alternative products">
    <event type="alternative splicing"/>
    <isoform>
        <id>Q8VI24-1</id>
        <name>1</name>
        <sequence type="displayed"/>
    </isoform>
    <isoform>
        <id>Q8VI24-2</id>
        <name>2</name>
        <sequence type="described" ref="VSP_008967"/>
    </isoform>
</comment>
<comment type="tissue specificity">
    <text evidence="9 10">Expressed in cortical neurons that extend axons across the corpus callosum. Also expressed in branchial arches and in cells of the osteoblast lineage, but not in chondrocytes and osteoclasts.</text>
</comment>
<comment type="developmental stage">
    <text evidence="8">Expression first detected at 10.5 dpc in the maxillary component of the first pharyngeal arch and the lateral aspect of the frontonasal process in the regions that will subsequently fuse to form the primary palate. At 11 - 11.5 dpc, the expression pattern demarcates the region of the medial aspect of the maxillary process within the primitive oral cavity, which will form the palate shelf. By 12.5 dpc, symmetrical expression is seen in the medial edges of the developing palate shelves and this continues until 13.5 dpc when the strongest expression is in the mesenchyme underlying the medial edge epithelia. By the time of palatal shelf fusion at 14.5 dpc the expression is dramatically down-regulated. No expression detected elsewhere in the embryo at any stage examined.</text>
</comment>
<comment type="PTM">
    <text evidence="1">Sumoylated by PIAS1. Sumoylation promotes nuclear localization, but represses transcription factor activity (By similarity).</text>
</comment>
<comment type="disruption phenotype">
    <text evidence="9 10 11">Malformations in 2 of the major axonal tracts interconnecting the cortical hemispheres: the corpus callosum (c.c) and the anterior commissure (a.c). Misrouted afferent and efferent cortical axon connections. Impaired migration of upper-layer neurons. Ectopic expression of Ctip2. Craniofacial abnormalities and defects in osteoblast differentiation and function.</text>
</comment>
<comment type="similarity">
    <text evidence="13">Belongs to the CUT homeobox family.</text>
</comment>
<comment type="sequence caution" evidence="13">
    <conflict type="erroneous initiation">
        <sequence resource="EMBL-CDS" id="BAC98080"/>
    </conflict>
</comment>
<organism>
    <name type="scientific">Mus musculus</name>
    <name type="common">Mouse</name>
    <dbReference type="NCBI Taxonomy" id="10090"/>
    <lineage>
        <taxon>Eukaryota</taxon>
        <taxon>Metazoa</taxon>
        <taxon>Chordata</taxon>
        <taxon>Craniata</taxon>
        <taxon>Vertebrata</taxon>
        <taxon>Euteleostomi</taxon>
        <taxon>Mammalia</taxon>
        <taxon>Eutheria</taxon>
        <taxon>Euarchontoglires</taxon>
        <taxon>Glires</taxon>
        <taxon>Rodentia</taxon>
        <taxon>Myomorpha</taxon>
        <taxon>Muroidea</taxon>
        <taxon>Muridae</taxon>
        <taxon>Murinae</taxon>
        <taxon>Mus</taxon>
        <taxon>Mus</taxon>
    </lineage>
</organism>
<evidence type="ECO:0000250" key="1"/>
<evidence type="ECO:0000250" key="2">
    <source>
        <dbReference type="UniProtKB" id="Q9UPW6"/>
    </source>
</evidence>
<evidence type="ECO:0000255" key="3">
    <source>
        <dbReference type="PROSITE-ProRule" id="PRU00108"/>
    </source>
</evidence>
<evidence type="ECO:0000255" key="4">
    <source>
        <dbReference type="PROSITE-ProRule" id="PRU00374"/>
    </source>
</evidence>
<evidence type="ECO:0000255" key="5">
    <source>
        <dbReference type="PROSITE-ProRule" id="PRU01326"/>
    </source>
</evidence>
<evidence type="ECO:0000255" key="6">
    <source>
        <dbReference type="PROSITE-ProRule" id="PRU01327"/>
    </source>
</evidence>
<evidence type="ECO:0000256" key="7">
    <source>
        <dbReference type="SAM" id="MobiDB-lite"/>
    </source>
</evidence>
<evidence type="ECO:0000269" key="8">
    <source>
    </source>
</evidence>
<evidence type="ECO:0000269" key="9">
    <source>
    </source>
</evidence>
<evidence type="ECO:0000269" key="10">
    <source>
    </source>
</evidence>
<evidence type="ECO:0000269" key="11">
    <source>
    </source>
</evidence>
<evidence type="ECO:0000303" key="12">
    <source>
    </source>
</evidence>
<evidence type="ECO:0000305" key="13"/>
<reference key="1">
    <citation type="journal article" date="2003" name="Hum. Mol. Genet.">
        <title>Identification of SATB2 as the cleft palate gene on 2q32-q33.</title>
        <authorList>
            <person name="FitzPatrick D.R."/>
            <person name="Carr I.M."/>
            <person name="McLaren L."/>
            <person name="Leek J.P."/>
            <person name="Wightman P."/>
            <person name="Williamson K."/>
            <person name="Gautier P."/>
            <person name="McGill N."/>
            <person name="Hayward C."/>
            <person name="Firth H."/>
            <person name="Markham A.F."/>
            <person name="Fantes J.A."/>
            <person name="Bonthron D.T."/>
        </authorList>
    </citation>
    <scope>NUCLEOTIDE SEQUENCE [MRNA] (ISOFORM 1)</scope>
    <scope>DEVELOPMENTAL STAGE</scope>
</reference>
<reference key="2">
    <citation type="journal article" date="2003" name="DNA Res.">
        <title>Prediction of the coding sequences of mouse homologues of KIAA gene: III. The complete nucleotide sequences of 500 mouse KIAA-homologous cDNAs identified by screening of terminal sequences of cDNA clones randomly sampled from size-fractionated libraries.</title>
        <authorList>
            <person name="Okazaki N."/>
            <person name="Kikuno R."/>
            <person name="Ohara R."/>
            <person name="Inamoto S."/>
            <person name="Koseki H."/>
            <person name="Hiraoka S."/>
            <person name="Saga Y."/>
            <person name="Nagase T."/>
            <person name="Ohara O."/>
            <person name="Koga H."/>
        </authorList>
    </citation>
    <scope>NUCLEOTIDE SEQUENCE [LARGE SCALE MRNA] (ISOFORM 2)</scope>
    <source>
        <tissue>Embryonic tail</tissue>
    </source>
</reference>
<reference key="3">
    <citation type="journal article" date="2006" name="Cell">
        <title>SATB2 is a multifunctional determinant of craniofacial patterning and osteoblast differentiation.</title>
        <authorList>
            <person name="Dobreva G."/>
            <person name="Chahrour M."/>
            <person name="Dautzenberg M."/>
            <person name="Chirivella L."/>
            <person name="Kanzler B."/>
            <person name="Farinas I."/>
            <person name="Karsenty G."/>
            <person name="Grosschedl R."/>
        </authorList>
    </citation>
    <scope>FUNCTION</scope>
    <scope>DISRUPTION PHENOTYPE</scope>
    <scope>INTERACTION WITH ATF4 AND RUNX2</scope>
    <scope>TISSUE SPECIFICITY</scope>
</reference>
<reference key="4">
    <citation type="journal article" date="2008" name="Neuron">
        <title>Satb2 regulates callosal projection neuron identity in the developing cerebral cortex.</title>
        <authorList>
            <person name="Alcamo E.A."/>
            <person name="Chirivella L."/>
            <person name="Dautzenberg M."/>
            <person name="Dobreva G."/>
            <person name="Farinas I."/>
            <person name="Grosschedl R."/>
            <person name="McConnell S.K."/>
        </authorList>
    </citation>
    <scope>FUNCTION</scope>
    <scope>DISRUPTION PHENOTYPE</scope>
    <scope>TISSUE SPECIFICITY</scope>
</reference>
<reference key="5">
    <citation type="journal article" date="2008" name="Neuron">
        <title>Satb2 is a postmitotic determinant for upper-layer neuron specification in the neocortex.</title>
        <authorList>
            <person name="Britanova O."/>
            <person name="de Juan Romero C."/>
            <person name="Cheung A."/>
            <person name="Kwan K.Y."/>
            <person name="Schwark M."/>
            <person name="Gyorgy A."/>
            <person name="Vogel T."/>
            <person name="Akopov S."/>
            <person name="Mitkovski M."/>
            <person name="Agoston D."/>
            <person name="Sestan N."/>
            <person name="Molnar Z."/>
            <person name="Tarabykin V."/>
        </authorList>
    </citation>
    <scope>FUNCTION</scope>
    <scope>DISRUPTION PHENOTYPE</scope>
</reference>
<reference key="6">
    <citation type="journal article" date="2010" name="Cell">
        <title>A tissue-specific atlas of mouse protein phosphorylation and expression.</title>
        <authorList>
            <person name="Huttlin E.L."/>
            <person name="Jedrychowski M.P."/>
            <person name="Elias J.E."/>
            <person name="Goswami T."/>
            <person name="Rad R."/>
            <person name="Beausoleil S.A."/>
            <person name="Villen J."/>
            <person name="Haas W."/>
            <person name="Sowa M.E."/>
            <person name="Gygi S.P."/>
        </authorList>
    </citation>
    <scope>IDENTIFICATION BY MASS SPECTROMETRY [LARGE SCALE ANALYSIS]</scope>
    <source>
        <tissue>Brain</tissue>
    </source>
</reference>
<protein>
    <recommendedName>
        <fullName>DNA-binding protein SATB2</fullName>
    </recommendedName>
    <alternativeName>
        <fullName>Special AT-rich sequence-binding protein 2</fullName>
    </alternativeName>
</protein>